<comment type="function">
    <text evidence="2">Involved in base excision repair of DNA damaged by oxidation or by mutagenic agents. Acts as a DNA glycosylase that recognizes and removes damaged bases. Has a preference for oxidized purines, such as 7,8-dihydro-8-oxoguanine (8-oxoG). Has AP (apurinic/apyrimidinic) lyase activity and introduces nicks in the DNA strand. Cleaves the DNA backbone by beta-delta elimination to generate a single-strand break at the site of the removed base with both 3'- and 5'-phosphates.</text>
</comment>
<comment type="catalytic activity">
    <reaction evidence="2">
        <text>Hydrolysis of DNA containing ring-opened 7-methylguanine residues, releasing 2,6-diamino-4-hydroxy-5-(N-methyl)formamidopyrimidine.</text>
        <dbReference type="EC" id="3.2.2.23"/>
    </reaction>
</comment>
<comment type="catalytic activity">
    <reaction evidence="2">
        <text>2'-deoxyribonucleotide-(2'-deoxyribose 5'-phosphate)-2'-deoxyribonucleotide-DNA = a 3'-end 2'-deoxyribonucleotide-(2,3-dehydro-2,3-deoxyribose 5'-phosphate)-DNA + a 5'-end 5'-phospho-2'-deoxyribonucleoside-DNA + H(+)</text>
        <dbReference type="Rhea" id="RHEA:66592"/>
        <dbReference type="Rhea" id="RHEA-COMP:13180"/>
        <dbReference type="Rhea" id="RHEA-COMP:16897"/>
        <dbReference type="Rhea" id="RHEA-COMP:17067"/>
        <dbReference type="ChEBI" id="CHEBI:15378"/>
        <dbReference type="ChEBI" id="CHEBI:136412"/>
        <dbReference type="ChEBI" id="CHEBI:157695"/>
        <dbReference type="ChEBI" id="CHEBI:167181"/>
        <dbReference type="EC" id="4.2.99.18"/>
    </reaction>
</comment>
<comment type="cofactor">
    <cofactor evidence="2">
        <name>Zn(2+)</name>
        <dbReference type="ChEBI" id="CHEBI:29105"/>
    </cofactor>
    <text evidence="2">Binds 1 zinc ion per subunit.</text>
</comment>
<comment type="subunit">
    <text evidence="2">Monomer.</text>
</comment>
<comment type="similarity">
    <text evidence="2">Belongs to the FPG family.</text>
</comment>
<reference key="1">
    <citation type="journal article" date="2007" name="PLoS Genet.">
        <title>Patterns and implications of gene gain and loss in the evolution of Prochlorococcus.</title>
        <authorList>
            <person name="Kettler G.C."/>
            <person name="Martiny A.C."/>
            <person name="Huang K."/>
            <person name="Zucker J."/>
            <person name="Coleman M.L."/>
            <person name="Rodrigue S."/>
            <person name="Chen F."/>
            <person name="Lapidus A."/>
            <person name="Ferriera S."/>
            <person name="Johnson J."/>
            <person name="Steglich C."/>
            <person name="Church G.M."/>
            <person name="Richardson P."/>
            <person name="Chisholm S.W."/>
        </authorList>
    </citation>
    <scope>NUCLEOTIDE SEQUENCE [LARGE SCALE GENOMIC DNA]</scope>
    <source>
        <strain>NATL2A</strain>
    </source>
</reference>
<dbReference type="EC" id="3.2.2.23" evidence="2"/>
<dbReference type="EC" id="4.2.99.18" evidence="2"/>
<dbReference type="EMBL" id="CP000095">
    <property type="protein sequence ID" value="AAZ59193.1"/>
    <property type="molecule type" value="Genomic_DNA"/>
</dbReference>
<dbReference type="RefSeq" id="WP_011294339.1">
    <property type="nucleotide sequence ID" value="NC_007335.2"/>
</dbReference>
<dbReference type="SMR" id="Q46H41"/>
<dbReference type="STRING" id="59920.PMN2A_1705"/>
<dbReference type="KEGG" id="pmn:PMN2A_1705"/>
<dbReference type="HOGENOM" id="CLU_038423_1_2_3"/>
<dbReference type="OrthoDB" id="9800855at2"/>
<dbReference type="PhylomeDB" id="Q46H41"/>
<dbReference type="Proteomes" id="UP000002535">
    <property type="component" value="Chromosome"/>
</dbReference>
<dbReference type="GO" id="GO:0034039">
    <property type="term" value="F:8-oxo-7,8-dihydroguanine DNA N-glycosylase activity"/>
    <property type="evidence" value="ECO:0007669"/>
    <property type="project" value="TreeGrafter"/>
</dbReference>
<dbReference type="GO" id="GO:0140078">
    <property type="term" value="F:class I DNA-(apurinic or apyrimidinic site) endonuclease activity"/>
    <property type="evidence" value="ECO:0007669"/>
    <property type="project" value="UniProtKB-EC"/>
</dbReference>
<dbReference type="GO" id="GO:0003684">
    <property type="term" value="F:damaged DNA binding"/>
    <property type="evidence" value="ECO:0007669"/>
    <property type="project" value="InterPro"/>
</dbReference>
<dbReference type="GO" id="GO:0008270">
    <property type="term" value="F:zinc ion binding"/>
    <property type="evidence" value="ECO:0007669"/>
    <property type="project" value="UniProtKB-UniRule"/>
</dbReference>
<dbReference type="GO" id="GO:0006284">
    <property type="term" value="P:base-excision repair"/>
    <property type="evidence" value="ECO:0007669"/>
    <property type="project" value="InterPro"/>
</dbReference>
<dbReference type="CDD" id="cd08966">
    <property type="entry name" value="EcFpg-like_N"/>
    <property type="match status" value="1"/>
</dbReference>
<dbReference type="FunFam" id="1.10.8.50:FF:000003">
    <property type="entry name" value="Formamidopyrimidine-DNA glycosylase"/>
    <property type="match status" value="1"/>
</dbReference>
<dbReference type="Gene3D" id="1.10.8.50">
    <property type="match status" value="1"/>
</dbReference>
<dbReference type="Gene3D" id="3.20.190.10">
    <property type="entry name" value="MutM-like, N-terminal"/>
    <property type="match status" value="1"/>
</dbReference>
<dbReference type="HAMAP" id="MF_00103">
    <property type="entry name" value="Fapy_DNA_glycosyl"/>
    <property type="match status" value="1"/>
</dbReference>
<dbReference type="InterPro" id="IPR015886">
    <property type="entry name" value="DNA_glyclase/AP_lyase_DNA-bd"/>
</dbReference>
<dbReference type="InterPro" id="IPR015887">
    <property type="entry name" value="DNA_glyclase_Znf_dom_DNA_BS"/>
</dbReference>
<dbReference type="InterPro" id="IPR020629">
    <property type="entry name" value="Formamido-pyr_DNA_Glyclase"/>
</dbReference>
<dbReference type="InterPro" id="IPR012319">
    <property type="entry name" value="FPG_cat"/>
</dbReference>
<dbReference type="InterPro" id="IPR035937">
    <property type="entry name" value="MutM-like_N-ter"/>
</dbReference>
<dbReference type="InterPro" id="IPR010979">
    <property type="entry name" value="Ribosomal_uS13-like_H2TH"/>
</dbReference>
<dbReference type="InterPro" id="IPR000214">
    <property type="entry name" value="Znf_DNA_glyclase/AP_lyase"/>
</dbReference>
<dbReference type="InterPro" id="IPR010663">
    <property type="entry name" value="Znf_FPG/IleRS"/>
</dbReference>
<dbReference type="NCBIfam" id="TIGR00577">
    <property type="entry name" value="fpg"/>
    <property type="match status" value="1"/>
</dbReference>
<dbReference type="NCBIfam" id="NF002211">
    <property type="entry name" value="PRK01103.1"/>
    <property type="match status" value="1"/>
</dbReference>
<dbReference type="NCBIfam" id="NF010551">
    <property type="entry name" value="PRK13945.1"/>
    <property type="match status" value="1"/>
</dbReference>
<dbReference type="PANTHER" id="PTHR22993">
    <property type="entry name" value="FORMAMIDOPYRIMIDINE-DNA GLYCOSYLASE"/>
    <property type="match status" value="1"/>
</dbReference>
<dbReference type="PANTHER" id="PTHR22993:SF9">
    <property type="entry name" value="FORMAMIDOPYRIMIDINE-DNA GLYCOSYLASE"/>
    <property type="match status" value="1"/>
</dbReference>
<dbReference type="Pfam" id="PF01149">
    <property type="entry name" value="Fapy_DNA_glyco"/>
    <property type="match status" value="1"/>
</dbReference>
<dbReference type="Pfam" id="PF06831">
    <property type="entry name" value="H2TH"/>
    <property type="match status" value="1"/>
</dbReference>
<dbReference type="Pfam" id="PF06827">
    <property type="entry name" value="zf-FPG_IleRS"/>
    <property type="match status" value="1"/>
</dbReference>
<dbReference type="SMART" id="SM00898">
    <property type="entry name" value="Fapy_DNA_glyco"/>
    <property type="match status" value="1"/>
</dbReference>
<dbReference type="SMART" id="SM01232">
    <property type="entry name" value="H2TH"/>
    <property type="match status" value="1"/>
</dbReference>
<dbReference type="SUPFAM" id="SSF57716">
    <property type="entry name" value="Glucocorticoid receptor-like (DNA-binding domain)"/>
    <property type="match status" value="1"/>
</dbReference>
<dbReference type="SUPFAM" id="SSF81624">
    <property type="entry name" value="N-terminal domain of MutM-like DNA repair proteins"/>
    <property type="match status" value="1"/>
</dbReference>
<dbReference type="SUPFAM" id="SSF46946">
    <property type="entry name" value="S13-like H2TH domain"/>
    <property type="match status" value="1"/>
</dbReference>
<dbReference type="PROSITE" id="PS51068">
    <property type="entry name" value="FPG_CAT"/>
    <property type="match status" value="1"/>
</dbReference>
<dbReference type="PROSITE" id="PS01242">
    <property type="entry name" value="ZF_FPG_1"/>
    <property type="match status" value="1"/>
</dbReference>
<dbReference type="PROSITE" id="PS51066">
    <property type="entry name" value="ZF_FPG_2"/>
    <property type="match status" value="1"/>
</dbReference>
<protein>
    <recommendedName>
        <fullName evidence="2">Formamidopyrimidine-DNA glycosylase</fullName>
        <shortName evidence="2">Fapy-DNA glycosylase</shortName>
        <ecNumber evidence="2">3.2.2.23</ecNumber>
    </recommendedName>
    <alternativeName>
        <fullName evidence="2">DNA-(apurinic or apyrimidinic site) lyase MutM</fullName>
        <shortName evidence="2">AP lyase MutM</shortName>
        <ecNumber evidence="2">4.2.99.18</ecNumber>
    </alternativeName>
</protein>
<evidence type="ECO:0000250" key="1"/>
<evidence type="ECO:0000255" key="2">
    <source>
        <dbReference type="HAMAP-Rule" id="MF_00103"/>
    </source>
</evidence>
<sequence>MPELPEVETVRKGLEKLLNDFYIERIEVLKERSIASNGGSKSFIVSVKNSYLGSWERRGKYLIGSLLTKEKFSKGFLVVHLRMTGQFKLLEKEVLACKHTRVRFFDERGRELRFIDIRNFGQMWHVPSSRSIPEIVSGIKRLGPEPFSDDFNSHYLEEYLKKKTRSIKSALLDQETVAGVGNIYADETLFDAGINPKKESRNLKSTELKRLCNSLVKILNISIGEGGTTFSDFRDLEGINGNYGGQAWVYRRSGKNCKKCGEKILREKICGRSTHWCPNCQK</sequence>
<name>FPG_PROMT</name>
<organism>
    <name type="scientific">Prochlorococcus marinus (strain NATL2A)</name>
    <dbReference type="NCBI Taxonomy" id="59920"/>
    <lineage>
        <taxon>Bacteria</taxon>
        <taxon>Bacillati</taxon>
        <taxon>Cyanobacteriota</taxon>
        <taxon>Cyanophyceae</taxon>
        <taxon>Synechococcales</taxon>
        <taxon>Prochlorococcaceae</taxon>
        <taxon>Prochlorococcus</taxon>
    </lineage>
</organism>
<accession>Q46H41</accession>
<gene>
    <name evidence="2" type="primary">mutM</name>
    <name evidence="2" type="synonym">fpg</name>
    <name type="ordered locus">PMN2A_1705</name>
</gene>
<keyword id="KW-0227">DNA damage</keyword>
<keyword id="KW-0234">DNA repair</keyword>
<keyword id="KW-0238">DNA-binding</keyword>
<keyword id="KW-0326">Glycosidase</keyword>
<keyword id="KW-0378">Hydrolase</keyword>
<keyword id="KW-0456">Lyase</keyword>
<keyword id="KW-0479">Metal-binding</keyword>
<keyword id="KW-0511">Multifunctional enzyme</keyword>
<keyword id="KW-1185">Reference proteome</keyword>
<keyword id="KW-0862">Zinc</keyword>
<keyword id="KW-0863">Zinc-finger</keyword>
<feature type="initiator methionine" description="Removed" evidence="1">
    <location>
        <position position="1"/>
    </location>
</feature>
<feature type="chain" id="PRO_0000228457" description="Formamidopyrimidine-DNA glycosylase">
    <location>
        <begin position="2"/>
        <end position="282"/>
    </location>
</feature>
<feature type="zinc finger region" description="FPG-type" evidence="2">
    <location>
        <begin position="248"/>
        <end position="282"/>
    </location>
</feature>
<feature type="active site" description="Schiff-base intermediate with DNA" evidence="2">
    <location>
        <position position="2"/>
    </location>
</feature>
<feature type="active site" description="Proton donor" evidence="2">
    <location>
        <position position="3"/>
    </location>
</feature>
<feature type="active site" description="Proton donor; for beta-elimination activity" evidence="2">
    <location>
        <position position="60"/>
    </location>
</feature>
<feature type="active site" description="Proton donor; for delta-elimination activity" evidence="2">
    <location>
        <position position="272"/>
    </location>
</feature>
<feature type="binding site" evidence="2">
    <location>
        <position position="99"/>
    </location>
    <ligand>
        <name>DNA</name>
        <dbReference type="ChEBI" id="CHEBI:16991"/>
    </ligand>
</feature>
<feature type="binding site" evidence="2">
    <location>
        <position position="118"/>
    </location>
    <ligand>
        <name>DNA</name>
        <dbReference type="ChEBI" id="CHEBI:16991"/>
    </ligand>
</feature>
<feature type="binding site" evidence="2">
    <location>
        <position position="163"/>
    </location>
    <ligand>
        <name>DNA</name>
        <dbReference type="ChEBI" id="CHEBI:16991"/>
    </ligand>
</feature>
<proteinExistence type="inferred from homology"/>